<comment type="function">
    <text evidence="1">Core subunit of the mitochondrial membrane respiratory chain NADH dehydrogenase (Complex I) which catalyzes electron transfer from NADH through the respiratory chain, using ubiquinone as an electron acceptor. Essential for the catalytic activity and assembly of complex I.</text>
</comment>
<comment type="catalytic activity">
    <reaction evidence="1">
        <text>a ubiquinone + NADH + 5 H(+)(in) = a ubiquinol + NAD(+) + 4 H(+)(out)</text>
        <dbReference type="Rhea" id="RHEA:29091"/>
        <dbReference type="Rhea" id="RHEA-COMP:9565"/>
        <dbReference type="Rhea" id="RHEA-COMP:9566"/>
        <dbReference type="ChEBI" id="CHEBI:15378"/>
        <dbReference type="ChEBI" id="CHEBI:16389"/>
        <dbReference type="ChEBI" id="CHEBI:17976"/>
        <dbReference type="ChEBI" id="CHEBI:57540"/>
        <dbReference type="ChEBI" id="CHEBI:57945"/>
        <dbReference type="EC" id="7.1.1.2"/>
    </reaction>
</comment>
<comment type="subunit">
    <text evidence="2">Core subunit of respiratory chain NADH dehydrogenase (Complex I) which is composed of 45 different subunits.</text>
</comment>
<comment type="subcellular location">
    <subcellularLocation>
        <location evidence="2">Mitochondrion inner membrane</location>
        <topology evidence="3">Multi-pass membrane protein</topology>
    </subcellularLocation>
</comment>
<comment type="similarity">
    <text evidence="4">Belongs to the complex I subunit 1 family.</text>
</comment>
<proteinExistence type="inferred from homology"/>
<protein>
    <recommendedName>
        <fullName>NADH-ubiquinone oxidoreductase chain 1</fullName>
        <ecNumber evidence="1">7.1.1.2</ecNumber>
    </recommendedName>
    <alternativeName>
        <fullName>NADH dehydrogenase subunit 1</fullName>
    </alternativeName>
</protein>
<accession>P92604</accession>
<accession>Q9T4Y4</accession>
<geneLocation type="mitochondrion"/>
<feature type="chain" id="PRO_0000117362" description="NADH-ubiquinone oxidoreductase chain 1">
    <location>
        <begin position="1"/>
        <end position="318"/>
    </location>
</feature>
<feature type="transmembrane region" description="Helical" evidence="3">
    <location>
        <begin position="2"/>
        <end position="22"/>
    </location>
</feature>
<feature type="transmembrane region" description="Helical" evidence="3">
    <location>
        <begin position="70"/>
        <end position="90"/>
    </location>
</feature>
<feature type="transmembrane region" description="Helical" evidence="3">
    <location>
        <begin position="100"/>
        <end position="120"/>
    </location>
</feature>
<feature type="transmembrane region" description="Helical" evidence="3">
    <location>
        <begin position="147"/>
        <end position="167"/>
    </location>
</feature>
<feature type="transmembrane region" description="Helical" evidence="3">
    <location>
        <begin position="171"/>
        <end position="191"/>
    </location>
</feature>
<feature type="transmembrane region" description="Helical" evidence="3">
    <location>
        <begin position="223"/>
        <end position="243"/>
    </location>
</feature>
<feature type="transmembrane region" description="Helical" evidence="3">
    <location>
        <begin position="253"/>
        <end position="273"/>
    </location>
</feature>
<feature type="transmembrane region" description="Helical" evidence="3">
    <location>
        <begin position="294"/>
        <end position="314"/>
    </location>
</feature>
<feature type="sequence conflict" description="In Ref. 2; AAB41650." evidence="4" ref="2">
    <original>I</original>
    <variation>S</variation>
    <location>
        <position position="87"/>
    </location>
</feature>
<feature type="sequence conflict" description="In Ref. 2; AAB41650." evidence="4" ref="2">
    <original>I</original>
    <variation>V</variation>
    <location>
        <position position="240"/>
    </location>
</feature>
<feature type="sequence conflict" description="In Ref. 2; AAB41650." evidence="4" ref="2">
    <original>A</original>
    <variation>S</variation>
    <location>
        <position position="306"/>
    </location>
</feature>
<reference key="1">
    <citation type="journal article" date="1998" name="Mol. Phylogenet. Evol.">
        <title>The complete nucleotide sequence of the domestic dog (Canis familiaris) mitochondrial genome.</title>
        <authorList>
            <person name="Kim K.S."/>
            <person name="Lee S.E."/>
            <person name="Jeong H.W."/>
            <person name="Ha J.H."/>
        </authorList>
    </citation>
    <scope>NUCLEOTIDE SEQUENCE [GENOMIC DNA]</scope>
    <source>
        <strain evidence="5">Boxer</strain>
    </source>
</reference>
<reference key="2">
    <citation type="submission" date="1997-02" db="EMBL/GenBank/DDBJ databases">
        <authorList>
            <person name="Marin-Garcia J."/>
            <person name="Goldenthal M."/>
            <person name="Ananthakrishnan R."/>
        </authorList>
    </citation>
    <scope>NUCLEOTIDE SEQUENCE [GENOMIC DNA]</scope>
    <source>
        <tissue>Heart</tissue>
    </source>
</reference>
<reference key="3">
    <citation type="journal article" date="2002" name="Mamm. Genome">
        <title>Multiple nuclear pseudogenes of mitochondrial DNA exist in the canine genome.</title>
        <authorList>
            <person name="Ishiguro N."/>
            <person name="Nakajima A."/>
            <person name="Horiuchi M."/>
            <person name="Shinagawa M."/>
        </authorList>
    </citation>
    <scope>NUCLEOTIDE SEQUENCE [GENOMIC DNA]</scope>
</reference>
<reference key="4">
    <citation type="submission" date="2004-08" db="EMBL/GenBank/DDBJ databases">
        <title>The complete mitochondrial DNA sequence of the Beagle dog (Canis familiaris).</title>
        <authorList>
            <person name="Zhu S."/>
            <person name="Xu Q."/>
            <person name="Chang H."/>
        </authorList>
    </citation>
    <scope>NUCLEOTIDE SEQUENCE [GENOMIC DNA]</scope>
    <source>
        <strain>Beagle</strain>
    </source>
</reference>
<evidence type="ECO:0000250" key="1">
    <source>
        <dbReference type="UniProtKB" id="P03886"/>
    </source>
</evidence>
<evidence type="ECO:0000250" key="2">
    <source>
        <dbReference type="UniProtKB" id="P03887"/>
    </source>
</evidence>
<evidence type="ECO:0000255" key="3"/>
<evidence type="ECO:0000305" key="4"/>
<evidence type="ECO:0000312" key="5">
    <source>
        <dbReference type="Proteomes" id="UP000002254"/>
    </source>
</evidence>
<organism>
    <name type="scientific">Canis lupus familiaris</name>
    <name type="common">Dog</name>
    <name type="synonym">Canis familiaris</name>
    <dbReference type="NCBI Taxonomy" id="9615"/>
    <lineage>
        <taxon>Eukaryota</taxon>
        <taxon>Metazoa</taxon>
        <taxon>Chordata</taxon>
        <taxon>Craniata</taxon>
        <taxon>Vertebrata</taxon>
        <taxon>Euteleostomi</taxon>
        <taxon>Mammalia</taxon>
        <taxon>Eutheria</taxon>
        <taxon>Laurasiatheria</taxon>
        <taxon>Carnivora</taxon>
        <taxon>Caniformia</taxon>
        <taxon>Canidae</taxon>
        <taxon>Canis</taxon>
    </lineage>
</organism>
<dbReference type="EC" id="7.1.1.2" evidence="1"/>
<dbReference type="EMBL" id="U96639">
    <property type="protein sequence ID" value="AAD04763.1"/>
    <property type="molecule type" value="Genomic_DNA"/>
</dbReference>
<dbReference type="EMBL" id="U41443">
    <property type="protein sequence ID" value="AAB41650.1"/>
    <property type="molecule type" value="Genomic_DNA"/>
</dbReference>
<dbReference type="EMBL" id="AB048590">
    <property type="protein sequence ID" value="BAB39141.1"/>
    <property type="molecule type" value="Genomic_DNA"/>
</dbReference>
<dbReference type="EMBL" id="AY729880">
    <property type="protein sequence ID" value="AAU12149.1"/>
    <property type="molecule type" value="Genomic_DNA"/>
</dbReference>
<dbReference type="PIR" id="T11493">
    <property type="entry name" value="T11493"/>
</dbReference>
<dbReference type="RefSeq" id="NP_008471.1">
    <property type="nucleotide sequence ID" value="NC_002008.4"/>
</dbReference>
<dbReference type="SMR" id="P92604"/>
<dbReference type="FunCoup" id="P92604">
    <property type="interactions" value="19"/>
</dbReference>
<dbReference type="STRING" id="9615.ENSCAFP00000030309"/>
<dbReference type="PaxDb" id="9612-ENSCAFP00000030309"/>
<dbReference type="GeneID" id="804476"/>
<dbReference type="KEGG" id="cfa:804476"/>
<dbReference type="CTD" id="4535"/>
<dbReference type="eggNOG" id="KOG4770">
    <property type="taxonomic scope" value="Eukaryota"/>
</dbReference>
<dbReference type="HOGENOM" id="CLU_015134_0_1_1"/>
<dbReference type="InParanoid" id="P92604"/>
<dbReference type="OMA" id="WSGWASN"/>
<dbReference type="TreeFam" id="TF352957"/>
<dbReference type="Proteomes" id="UP000002254">
    <property type="component" value="Mitochondrion"/>
</dbReference>
<dbReference type="Proteomes" id="UP000694429">
    <property type="component" value="Unplaced"/>
</dbReference>
<dbReference type="Proteomes" id="UP000694542">
    <property type="component" value="Unassembled WGS sequence"/>
</dbReference>
<dbReference type="Proteomes" id="UP000805418">
    <property type="component" value="Mitochondrion MT"/>
</dbReference>
<dbReference type="Bgee" id="ENSCAFG00000022713">
    <property type="expression patterns" value="Expressed in prefrontal cortex and 46 other cell types or tissues"/>
</dbReference>
<dbReference type="GO" id="GO:0005743">
    <property type="term" value="C:mitochondrial inner membrane"/>
    <property type="evidence" value="ECO:0000250"/>
    <property type="project" value="UniProtKB"/>
</dbReference>
<dbReference type="GO" id="GO:0045271">
    <property type="term" value="C:respiratory chain complex I"/>
    <property type="evidence" value="ECO:0000318"/>
    <property type="project" value="GO_Central"/>
</dbReference>
<dbReference type="GO" id="GO:0008137">
    <property type="term" value="F:NADH dehydrogenase (ubiquinone) activity"/>
    <property type="evidence" value="ECO:0000250"/>
    <property type="project" value="UniProtKB"/>
</dbReference>
<dbReference type="GO" id="GO:0009060">
    <property type="term" value="P:aerobic respiration"/>
    <property type="evidence" value="ECO:0000318"/>
    <property type="project" value="GO_Central"/>
</dbReference>
<dbReference type="GO" id="GO:0006120">
    <property type="term" value="P:mitochondrial electron transport, NADH to ubiquinone"/>
    <property type="evidence" value="ECO:0000250"/>
    <property type="project" value="UniProtKB"/>
</dbReference>
<dbReference type="GO" id="GO:0032981">
    <property type="term" value="P:mitochondrial respiratory chain complex I assembly"/>
    <property type="evidence" value="ECO:0000250"/>
    <property type="project" value="UniProtKB"/>
</dbReference>
<dbReference type="HAMAP" id="MF_01350">
    <property type="entry name" value="NDH1_NuoH"/>
    <property type="match status" value="1"/>
</dbReference>
<dbReference type="InterPro" id="IPR001694">
    <property type="entry name" value="NADH_UbQ_OxRdtase_su1/FPO"/>
</dbReference>
<dbReference type="InterPro" id="IPR018086">
    <property type="entry name" value="NADH_UbQ_OxRdtase_su1_CS"/>
</dbReference>
<dbReference type="PANTHER" id="PTHR11432">
    <property type="entry name" value="NADH DEHYDROGENASE SUBUNIT 1"/>
    <property type="match status" value="1"/>
</dbReference>
<dbReference type="PANTHER" id="PTHR11432:SF3">
    <property type="entry name" value="NADH-UBIQUINONE OXIDOREDUCTASE CHAIN 1"/>
    <property type="match status" value="1"/>
</dbReference>
<dbReference type="Pfam" id="PF00146">
    <property type="entry name" value="NADHdh"/>
    <property type="match status" value="1"/>
</dbReference>
<dbReference type="PROSITE" id="PS00667">
    <property type="entry name" value="COMPLEX1_ND1_1"/>
    <property type="match status" value="1"/>
</dbReference>
<dbReference type="PROSITE" id="PS00668">
    <property type="entry name" value="COMPLEX1_ND1_2"/>
    <property type="match status" value="1"/>
</dbReference>
<gene>
    <name type="primary">MT-ND1</name>
    <name type="synonym">MTND1</name>
    <name type="synonym">NADH1</name>
    <name type="synonym">ND1</name>
</gene>
<sequence length="318" mass="35892">MFFINIISLIIPILLAVAFLTLVERKVLGYMQLRKGPNIVGPYGLLQPIADAVKLFTKEPLRPLTSSMSMFILAPILALSLALTMWIPLPMPYPLINMNLGVLFMLAMSSLAVYSILWSGWASNSKYALIGALRAVAQTISYEVTLAIILLSVLLMNGSFTLSTLIITQEHMWLIFPAWPLAMMWFISTLAETNRAPFDLTEGESELVSGFNVEYAAGPFALFFLAEYANIIMMNILTTILFFGAFHNPFMPELYSINFTMKTLLLTICFLWIRASYPRFRYDQLMHLLWKNFLPLTLALCMWHVALPIITASIPPQT</sequence>
<keyword id="KW-0249">Electron transport</keyword>
<keyword id="KW-0472">Membrane</keyword>
<keyword id="KW-0496">Mitochondrion</keyword>
<keyword id="KW-0999">Mitochondrion inner membrane</keyword>
<keyword id="KW-0520">NAD</keyword>
<keyword id="KW-1185">Reference proteome</keyword>
<keyword id="KW-0679">Respiratory chain</keyword>
<keyword id="KW-1278">Translocase</keyword>
<keyword id="KW-0812">Transmembrane</keyword>
<keyword id="KW-1133">Transmembrane helix</keyword>
<keyword id="KW-0813">Transport</keyword>
<keyword id="KW-0830">Ubiquinone</keyword>
<name>NU1M_CANLF</name>